<feature type="chain" id="PRO_0000210963" description="Peptide chain release factor 3">
    <location>
        <begin position="1"/>
        <end position="520"/>
    </location>
</feature>
<feature type="domain" description="tr-type G">
    <location>
        <begin position="8"/>
        <end position="277"/>
    </location>
</feature>
<feature type="binding site" evidence="1">
    <location>
        <begin position="17"/>
        <end position="24"/>
    </location>
    <ligand>
        <name>GTP</name>
        <dbReference type="ChEBI" id="CHEBI:37565"/>
    </ligand>
</feature>
<feature type="binding site" evidence="1">
    <location>
        <begin position="85"/>
        <end position="89"/>
    </location>
    <ligand>
        <name>GTP</name>
        <dbReference type="ChEBI" id="CHEBI:37565"/>
    </ligand>
</feature>
<feature type="binding site" evidence="1">
    <location>
        <begin position="139"/>
        <end position="142"/>
    </location>
    <ligand>
        <name>GTP</name>
        <dbReference type="ChEBI" id="CHEBI:37565"/>
    </ligand>
</feature>
<organism>
    <name type="scientific">Staphylococcus aureus (strain N315)</name>
    <dbReference type="NCBI Taxonomy" id="158879"/>
    <lineage>
        <taxon>Bacteria</taxon>
        <taxon>Bacillati</taxon>
        <taxon>Bacillota</taxon>
        <taxon>Bacilli</taxon>
        <taxon>Bacillales</taxon>
        <taxon>Staphylococcaceae</taxon>
        <taxon>Staphylococcus</taxon>
    </lineage>
</organism>
<dbReference type="EMBL" id="BA000018">
    <property type="protein sequence ID" value="BAB42119.1"/>
    <property type="molecule type" value="Genomic_DNA"/>
</dbReference>
<dbReference type="PIR" id="D89870">
    <property type="entry name" value="D89870"/>
</dbReference>
<dbReference type="RefSeq" id="WP_001049950.1">
    <property type="nucleotide sequence ID" value="NC_002745.2"/>
</dbReference>
<dbReference type="SMR" id="Q99V72"/>
<dbReference type="EnsemblBacteria" id="BAB42119">
    <property type="protein sequence ID" value="BAB42119"/>
    <property type="gene ID" value="BAB42119"/>
</dbReference>
<dbReference type="KEGG" id="sau:SA0877"/>
<dbReference type="HOGENOM" id="CLU_002794_2_1_9"/>
<dbReference type="GO" id="GO:0005829">
    <property type="term" value="C:cytosol"/>
    <property type="evidence" value="ECO:0007669"/>
    <property type="project" value="TreeGrafter"/>
</dbReference>
<dbReference type="GO" id="GO:0005525">
    <property type="term" value="F:GTP binding"/>
    <property type="evidence" value="ECO:0007669"/>
    <property type="project" value="UniProtKB-UniRule"/>
</dbReference>
<dbReference type="GO" id="GO:0003924">
    <property type="term" value="F:GTPase activity"/>
    <property type="evidence" value="ECO:0007669"/>
    <property type="project" value="InterPro"/>
</dbReference>
<dbReference type="GO" id="GO:0016150">
    <property type="term" value="F:translation release factor activity, codon nonspecific"/>
    <property type="evidence" value="ECO:0007669"/>
    <property type="project" value="TreeGrafter"/>
</dbReference>
<dbReference type="GO" id="GO:0016149">
    <property type="term" value="F:translation release factor activity, codon specific"/>
    <property type="evidence" value="ECO:0007669"/>
    <property type="project" value="UniProtKB-UniRule"/>
</dbReference>
<dbReference type="GO" id="GO:0006449">
    <property type="term" value="P:regulation of translational termination"/>
    <property type="evidence" value="ECO:0007669"/>
    <property type="project" value="UniProtKB-UniRule"/>
</dbReference>
<dbReference type="CDD" id="cd04169">
    <property type="entry name" value="RF3"/>
    <property type="match status" value="1"/>
</dbReference>
<dbReference type="CDD" id="cd16259">
    <property type="entry name" value="RF3_III"/>
    <property type="match status" value="1"/>
</dbReference>
<dbReference type="FunFam" id="2.40.30.10:FF:000040">
    <property type="entry name" value="Peptide chain release factor 3"/>
    <property type="match status" value="1"/>
</dbReference>
<dbReference type="FunFam" id="3.30.70.3280:FF:000001">
    <property type="entry name" value="Peptide chain release factor 3"/>
    <property type="match status" value="1"/>
</dbReference>
<dbReference type="FunFam" id="3.40.50.300:FF:000542">
    <property type="entry name" value="Peptide chain release factor 3"/>
    <property type="match status" value="1"/>
</dbReference>
<dbReference type="Gene3D" id="3.40.50.300">
    <property type="entry name" value="P-loop containing nucleotide triphosphate hydrolases"/>
    <property type="match status" value="1"/>
</dbReference>
<dbReference type="Gene3D" id="3.30.70.3280">
    <property type="entry name" value="Peptide chain release factor 3, domain III"/>
    <property type="match status" value="1"/>
</dbReference>
<dbReference type="Gene3D" id="2.40.30.10">
    <property type="entry name" value="Translation factors"/>
    <property type="match status" value="1"/>
</dbReference>
<dbReference type="HAMAP" id="MF_00072">
    <property type="entry name" value="Rel_fac_3"/>
    <property type="match status" value="1"/>
</dbReference>
<dbReference type="InterPro" id="IPR053905">
    <property type="entry name" value="EF-G-like_DII"/>
</dbReference>
<dbReference type="InterPro" id="IPR035647">
    <property type="entry name" value="EFG_III/V"/>
</dbReference>
<dbReference type="InterPro" id="IPR031157">
    <property type="entry name" value="G_TR_CS"/>
</dbReference>
<dbReference type="InterPro" id="IPR027417">
    <property type="entry name" value="P-loop_NTPase"/>
</dbReference>
<dbReference type="InterPro" id="IPR004548">
    <property type="entry name" value="PrfC"/>
</dbReference>
<dbReference type="InterPro" id="IPR032090">
    <property type="entry name" value="RF3_C"/>
</dbReference>
<dbReference type="InterPro" id="IPR038467">
    <property type="entry name" value="RF3_dom_3_sf"/>
</dbReference>
<dbReference type="InterPro" id="IPR041732">
    <property type="entry name" value="RF3_GTP-bd"/>
</dbReference>
<dbReference type="InterPro" id="IPR005225">
    <property type="entry name" value="Small_GTP-bd"/>
</dbReference>
<dbReference type="InterPro" id="IPR000795">
    <property type="entry name" value="T_Tr_GTP-bd_dom"/>
</dbReference>
<dbReference type="InterPro" id="IPR009000">
    <property type="entry name" value="Transl_B-barrel_sf"/>
</dbReference>
<dbReference type="NCBIfam" id="TIGR00503">
    <property type="entry name" value="prfC"/>
    <property type="match status" value="1"/>
</dbReference>
<dbReference type="NCBIfam" id="NF001964">
    <property type="entry name" value="PRK00741.1"/>
    <property type="match status" value="1"/>
</dbReference>
<dbReference type="NCBIfam" id="TIGR00231">
    <property type="entry name" value="small_GTP"/>
    <property type="match status" value="1"/>
</dbReference>
<dbReference type="PANTHER" id="PTHR43556">
    <property type="entry name" value="PEPTIDE CHAIN RELEASE FACTOR RF3"/>
    <property type="match status" value="1"/>
</dbReference>
<dbReference type="PANTHER" id="PTHR43556:SF2">
    <property type="entry name" value="PEPTIDE CHAIN RELEASE FACTOR RF3"/>
    <property type="match status" value="1"/>
</dbReference>
<dbReference type="Pfam" id="PF22042">
    <property type="entry name" value="EF-G_D2"/>
    <property type="match status" value="1"/>
</dbReference>
<dbReference type="Pfam" id="PF00009">
    <property type="entry name" value="GTP_EFTU"/>
    <property type="match status" value="1"/>
</dbReference>
<dbReference type="Pfam" id="PF16658">
    <property type="entry name" value="RF3_C"/>
    <property type="match status" value="1"/>
</dbReference>
<dbReference type="PRINTS" id="PR00315">
    <property type="entry name" value="ELONGATNFCT"/>
</dbReference>
<dbReference type="SUPFAM" id="SSF54980">
    <property type="entry name" value="EF-G C-terminal domain-like"/>
    <property type="match status" value="1"/>
</dbReference>
<dbReference type="SUPFAM" id="SSF52540">
    <property type="entry name" value="P-loop containing nucleoside triphosphate hydrolases"/>
    <property type="match status" value="1"/>
</dbReference>
<dbReference type="SUPFAM" id="SSF50447">
    <property type="entry name" value="Translation proteins"/>
    <property type="match status" value="1"/>
</dbReference>
<dbReference type="PROSITE" id="PS00301">
    <property type="entry name" value="G_TR_1"/>
    <property type="match status" value="1"/>
</dbReference>
<dbReference type="PROSITE" id="PS51722">
    <property type="entry name" value="G_TR_2"/>
    <property type="match status" value="1"/>
</dbReference>
<reference key="1">
    <citation type="journal article" date="2001" name="Lancet">
        <title>Whole genome sequencing of meticillin-resistant Staphylococcus aureus.</title>
        <authorList>
            <person name="Kuroda M."/>
            <person name="Ohta T."/>
            <person name="Uchiyama I."/>
            <person name="Baba T."/>
            <person name="Yuzawa H."/>
            <person name="Kobayashi I."/>
            <person name="Cui L."/>
            <person name="Oguchi A."/>
            <person name="Aoki K."/>
            <person name="Nagai Y."/>
            <person name="Lian J.-Q."/>
            <person name="Ito T."/>
            <person name="Kanamori M."/>
            <person name="Matsumaru H."/>
            <person name="Maruyama A."/>
            <person name="Murakami H."/>
            <person name="Hosoyama A."/>
            <person name="Mizutani-Ui Y."/>
            <person name="Takahashi N.K."/>
            <person name="Sawano T."/>
            <person name="Inoue R."/>
            <person name="Kaito C."/>
            <person name="Sekimizu K."/>
            <person name="Hirakawa H."/>
            <person name="Kuhara S."/>
            <person name="Goto S."/>
            <person name="Yabuzaki J."/>
            <person name="Kanehisa M."/>
            <person name="Yamashita A."/>
            <person name="Oshima K."/>
            <person name="Furuya K."/>
            <person name="Yoshino C."/>
            <person name="Shiba T."/>
            <person name="Hattori M."/>
            <person name="Ogasawara N."/>
            <person name="Hayashi H."/>
            <person name="Hiramatsu K."/>
        </authorList>
    </citation>
    <scope>NUCLEOTIDE SEQUENCE [LARGE SCALE GENOMIC DNA]</scope>
    <source>
        <strain>N315</strain>
    </source>
</reference>
<reference key="2">
    <citation type="submission" date="2007-10" db="UniProtKB">
        <title>Shotgun proteomic analysis of total and membrane protein extracts of S. aureus strain N315.</title>
        <authorList>
            <person name="Vaezzadeh A.R."/>
            <person name="Deshusses J."/>
            <person name="Lescuyer P."/>
            <person name="Hochstrasser D.F."/>
        </authorList>
    </citation>
    <scope>IDENTIFICATION BY MASS SPECTROMETRY [LARGE SCALE ANALYSIS]</scope>
    <source>
        <strain>N315</strain>
    </source>
</reference>
<name>RF3_STAAN</name>
<protein>
    <recommendedName>
        <fullName>Peptide chain release factor 3</fullName>
        <shortName>RF-3</shortName>
    </recommendedName>
</protein>
<evidence type="ECO:0000250" key="1"/>
<evidence type="ECO:0000305" key="2"/>
<sequence>MNLKQEVESRKTFAIISHPDAGKTTLTEKLLYFSGAIREAGTVKGKKTGKFATSDWMKVEQERGISVTSSVMQFDYDDYKINILDTPGHEDFSEDTYRTLMAVDSAVMVIDCAKGIEPQTLKLFKVCKMRGIPIFTFINKLDRVGKEPFELLDEIEETLNIETYPMNWPIGMGQSFFGIIDRKSKTIEPFRDEENILHLNDDFELEEDHAITNDSAFEQAIEELMLVEEAGEAFDNDALLSGDLTPVFFGSALANFGVQNFLNAYVDFAPMPNARQTKEDVEVSPFDDSFSGFIFKIQANMDPKHRDRIAFMRVVSGAFERGMDVTLQRTNKKQKITRSTSFMADDKETVNHAVAGDIIGLYDTGNYQIGDTLVGGKQTYSFQDLPQFTPEIFMKVSAKNVMKQKHFHKGIEQLVQEGAIQYYKTLHTNQIILGAVGQLQFEVFEHRMKNEYNVDVVMEPVGRKIARWIENEDQITDKMNTSRSILVKDRYDDLVFLFENEFATRWFEEKFLEIKLYSLL</sequence>
<comment type="function">
    <text evidence="1">Increases the formation of ribosomal termination complexes and stimulates activities of RF-1 and RF-2. It binds guanine nucleotides and has strong preference for UGA stop codons. It may interact directly with the ribosome. The stimulation of RF-1 and RF-2 is significantly reduced by GTP and GDP, but not by GMP (By similarity).</text>
</comment>
<comment type="subcellular location">
    <subcellularLocation>
        <location evidence="1">Cytoplasm</location>
    </subcellularLocation>
</comment>
<comment type="similarity">
    <text evidence="2">Belongs to the TRAFAC class translation factor GTPase superfamily. Classic translation factor GTPase family. PrfC subfamily.</text>
</comment>
<accession>Q99V72</accession>
<proteinExistence type="evidence at protein level"/>
<gene>
    <name type="primary">prfC</name>
    <name type="ordered locus">SA0877</name>
</gene>
<keyword id="KW-0963">Cytoplasm</keyword>
<keyword id="KW-0342">GTP-binding</keyword>
<keyword id="KW-0547">Nucleotide-binding</keyword>
<keyword id="KW-0648">Protein biosynthesis</keyword>